<keyword id="KW-0002">3D-structure</keyword>
<keyword id="KW-1064">Adaptive immunity</keyword>
<keyword id="KW-0025">Alternative splicing</keyword>
<keyword id="KW-1003">Cell membrane</keyword>
<keyword id="KW-0903">Direct protein sequencing</keyword>
<keyword id="KW-1015">Disulfide bond</keyword>
<keyword id="KW-0325">Glycoprotein</keyword>
<keyword id="KW-0391">Immunity</keyword>
<keyword id="KW-1280">Immunoglobulin</keyword>
<keyword id="KW-0393">Immunoglobulin domain</keyword>
<keyword id="KW-0395">Inflammatory response</keyword>
<keyword id="KW-0472">Membrane</keyword>
<keyword id="KW-1267">Proteomics identification</keyword>
<keyword id="KW-1185">Reference proteome</keyword>
<keyword id="KW-0677">Repeat</keyword>
<keyword id="KW-0964">Secreted</keyword>
<keyword id="KW-0812">Transmembrane</keyword>
<keyword id="KW-1133">Transmembrane helix</keyword>
<reference key="1">
    <citation type="book" date="1978" name="Immediate hypersensitivity: modern concepts and developments">
        <editorList>
            <person name="Bach M.K."/>
        </editorList>
        <authorList>
            <person name="Bennich H.H."/>
            <person name="Johansson S.G.O."/>
            <person name="von Bahr-Lindstroem H."/>
        </authorList>
    </citation>
    <scope>PROTEIN SEQUENCE</scope>
</reference>
<reference key="2">
    <citation type="journal article" date="1982" name="Cell">
        <title>Duplication and deletion in the human immunoglobulin epsilon genes.</title>
        <authorList>
            <person name="Max E.E."/>
            <person name="Battey J."/>
            <person name="Ney R."/>
            <person name="Kirsch I.R."/>
            <person name="Leder P."/>
        </authorList>
    </citation>
    <scope>NUCLEOTIDE SEQUENCE [GENOMIC DNA]</scope>
    <scope>VARIANT LEU-359</scope>
</reference>
<reference key="3">
    <citation type="journal article" date="1982" name="EMBO J.">
        <title>The sequence of a human immunoglobulin epsilon heavy chain constant region gene, and evidence for three non-allelic genes.</title>
        <authorList>
            <person name="Flanagan J.G."/>
            <person name="Rabbitts T.H."/>
        </authorList>
    </citation>
    <scope>NUCLEOTIDE SEQUENCE [GENOMIC DNA] (IMGT ALLELE IGHE*02)</scope>
</reference>
<reference key="4">
    <citation type="journal article" date="1982" name="EMBO J.">
        <title>Long terminal repeat-like elements flank a human immunoglobulin epsilon pseudogene that lacks introns.</title>
        <authorList>
            <person name="Ueda S."/>
            <person name="Nakai S."/>
            <person name="Nishida Y."/>
            <person name="Hisajima H."/>
            <person name="Honjo T."/>
        </authorList>
    </citation>
    <scope>NUCLEOTIDE SEQUENCE [GENOMIC DNA] (IMGT ALLELE IGHE*01)</scope>
    <scope>VARIANT CYS-43</scope>
</reference>
<reference key="5">
    <citation type="journal article" date="1983" name="Nucleic Acids Res.">
        <title>Molecular cloning and nucleotide sequencing of human immunoglobulin epsilon chain cDNA.</title>
        <authorList>
            <person name="Seno M."/>
            <person name="Kurokawa T."/>
            <person name="Ono Y."/>
            <person name="Onda H."/>
            <person name="Sasada R."/>
            <person name="Igarashi K."/>
            <person name="Kikuchi M."/>
            <person name="Sugino Y."/>
            <person name="Nishida Y."/>
            <person name="Honjo T."/>
        </authorList>
    </citation>
    <scope>NUCLEOTIDE SEQUENCE [GENOMIC DNA] (IMGT ALLELE IGHE*02)</scope>
</reference>
<reference key="6">
    <citation type="journal article" date="2003" name="Nature">
        <title>The DNA sequence and analysis of human chromosome 14.</title>
        <authorList>
            <person name="Heilig R."/>
            <person name="Eckenberg R."/>
            <person name="Petit J.-L."/>
            <person name="Fonknechten N."/>
            <person name="Da Silva C."/>
            <person name="Cattolico L."/>
            <person name="Levy M."/>
            <person name="Barbe V."/>
            <person name="De Berardinis V."/>
            <person name="Ureta-Vidal A."/>
            <person name="Pelletier E."/>
            <person name="Vico V."/>
            <person name="Anthouard V."/>
            <person name="Rowen L."/>
            <person name="Madan A."/>
            <person name="Qin S."/>
            <person name="Sun H."/>
            <person name="Du H."/>
            <person name="Pepin K."/>
            <person name="Artiguenave F."/>
            <person name="Robert C."/>
            <person name="Cruaud C."/>
            <person name="Bruels T."/>
            <person name="Jaillon O."/>
            <person name="Friedlander L."/>
            <person name="Samson G."/>
            <person name="Brottier P."/>
            <person name="Cure S."/>
            <person name="Segurens B."/>
            <person name="Aniere F."/>
            <person name="Samain S."/>
            <person name="Crespeau H."/>
            <person name="Abbasi N."/>
            <person name="Aiach N."/>
            <person name="Boscus D."/>
            <person name="Dickhoff R."/>
            <person name="Dors M."/>
            <person name="Dubois I."/>
            <person name="Friedman C."/>
            <person name="Gouyvenoux M."/>
            <person name="James R."/>
            <person name="Madan A."/>
            <person name="Mairey-Estrada B."/>
            <person name="Mangenot S."/>
            <person name="Martins N."/>
            <person name="Menard M."/>
            <person name="Oztas S."/>
            <person name="Ratcliffe A."/>
            <person name="Shaffer T."/>
            <person name="Trask B."/>
            <person name="Vacherie B."/>
            <person name="Bellemere C."/>
            <person name="Belser C."/>
            <person name="Besnard-Gonnet M."/>
            <person name="Bartol-Mavel D."/>
            <person name="Boutard M."/>
            <person name="Briez-Silla S."/>
            <person name="Combette S."/>
            <person name="Dufosse-Laurent V."/>
            <person name="Ferron C."/>
            <person name="Lechaplais C."/>
            <person name="Louesse C."/>
            <person name="Muselet D."/>
            <person name="Magdelenat G."/>
            <person name="Pateau E."/>
            <person name="Petit E."/>
            <person name="Sirvain-Trukniewicz P."/>
            <person name="Trybou A."/>
            <person name="Vega-Czarny N."/>
            <person name="Bataille E."/>
            <person name="Bluet E."/>
            <person name="Bordelais I."/>
            <person name="Dubois M."/>
            <person name="Dumont C."/>
            <person name="Guerin T."/>
            <person name="Haffray S."/>
            <person name="Hammadi R."/>
            <person name="Muanga J."/>
            <person name="Pellouin V."/>
            <person name="Robert D."/>
            <person name="Wunderle E."/>
            <person name="Gauguet G."/>
            <person name="Roy A."/>
            <person name="Sainte-Marthe L."/>
            <person name="Verdier J."/>
            <person name="Verdier-Discala C."/>
            <person name="Hillier L.W."/>
            <person name="Fulton L."/>
            <person name="McPherson J."/>
            <person name="Matsuda F."/>
            <person name="Wilson R."/>
            <person name="Scarpelli C."/>
            <person name="Gyapay G."/>
            <person name="Wincker P."/>
            <person name="Saurin W."/>
            <person name="Quetier F."/>
            <person name="Waterston R."/>
            <person name="Hood L."/>
            <person name="Weissenbach J."/>
        </authorList>
    </citation>
    <scope>NUCLEOTIDE SEQUENCE [LARGE SCALE GENOMIC DNA] (IMGT ALLELE IGHE*04)</scope>
</reference>
<reference key="7">
    <citation type="journal article" date="1982" name="Proc. Natl. Acad. Sci. U.S.A.">
        <title>Cloning and sequence determination of the gene for the human immunoglobulin epsilon chain expressed in a myeloma cell line.</title>
        <authorList>
            <person name="Kenten J.H."/>
            <person name="Molgaard H.V."/>
            <person name="Houghton M."/>
            <person name="Derbyshire R.B."/>
            <person name="Viney J."/>
            <person name="Bell L.O."/>
            <person name="Gould H.J."/>
        </authorList>
    </citation>
    <scope>NUCLEOTIDE SEQUENCE [GENOMIC DNA] OF 1-40; 68-114 AND 427-428</scope>
</reference>
<reference key="8">
    <citation type="journal article" date="1992" name="J. Immunol.">
        <title>A new isoform of human membrane-bound IgE.</title>
        <authorList>
            <person name="Peng C."/>
            <person name="Davis F.M."/>
            <person name="Sun L.K."/>
            <person name="Liou R.S."/>
            <person name="Kim Y.W."/>
            <person name="Chang T.W."/>
        </authorList>
    </citation>
    <scope>NUCLEOTIDE SEQUENCE [MRNA] OF 427-546 (ISOFORMS 2 AND 3)</scope>
    <scope>ALTERNATIVE SPLICING</scope>
</reference>
<reference key="9">
    <citation type="journal article" date="1992" name="J. Exp. Med.">
        <title>Two unusual forms of human immunoglobulin E encoded by alternative RNA splicing of epsilon heavy chain membrane exons.</title>
        <authorList>
            <person name="Zhang K."/>
            <person name="Saxon A."/>
            <person name="Max E.E."/>
        </authorList>
    </citation>
    <scope>NUCLEOTIDE SEQUENCE [GENOMIC DNA] OF 427-546 (ISOFORM 2)</scope>
    <scope>ALTERNATIVE SPLICING</scope>
    <scope>TISSUE SPECIFICITY (ISOFORM 2)</scope>
</reference>
<reference key="10">
    <citation type="journal article" date="1990" name="Eur. J. Immunol.">
        <title>IgE-dependent antigen focusing by human B lymphocytes is mediated by the low-affinity receptor for IgE.</title>
        <authorList>
            <person name="Pirron U."/>
            <person name="Schlunck T."/>
            <person name="Prinz J.C."/>
            <person name="Rieber E.P."/>
        </authorList>
    </citation>
    <scope>FUNCTION (ISOFORM 1)</scope>
</reference>
<reference key="11">
    <citation type="journal article" date="1994" name="Nature">
        <title>High-affinity IgE receptor on eosinophils is involved in defence against parasites.</title>
        <authorList>
            <person name="Gounni A.S."/>
            <person name="Lamkhioued B."/>
            <person name="Ochiai K."/>
            <person name="Tanaka Y."/>
            <person name="Delaporte E."/>
            <person name="Capron A."/>
            <person name="Kinet J.P."/>
            <person name="Capron M."/>
        </authorList>
    </citation>
    <scope>FUNCTION (ISOFORM 1)</scope>
</reference>
<reference key="12">
    <citation type="journal article" date="1995" name="J. Immunol.">
        <title>Characterization and expression of alternatively spliced IgE heavy chain transcripts produced by peripheral blood lymphocytes.</title>
        <authorList>
            <person name="Batista F.D."/>
            <person name="Efremov D.G."/>
            <person name="Burrone O.R."/>
        </authorList>
    </citation>
    <scope>SUBCELLULAR LOCATION (ISOFORMS 1 AND 2)</scope>
    <scope>SUBUNIT (ISOFORM 1)</scope>
</reference>
<reference key="13">
    <citation type="journal article" date="1995" name="Proc. Natl. Acad. Sci. U.S.A.">
        <title>The killing of Leishmania major by human macrophages is mediated by nitric oxide induced after ligation of the Fc epsilon RII/CD23 surface antigen.</title>
        <authorList>
            <person name="Vouldoukis I."/>
            <person name="Riveros-Moreno V."/>
            <person name="Dugas B."/>
            <person name="Ouaaz F."/>
            <person name="Becherel P."/>
            <person name="Debre P."/>
            <person name="Moncada S."/>
            <person name="Mossalayi M.D."/>
        </authorList>
    </citation>
    <scope>FUNCTION (ISOFORM 1)</scope>
</reference>
<reference key="14">
    <citation type="journal article" date="1996" name="J. Exp. Med.">
        <title>Transgenic mice expressing the human high-affinity immunoglobulin (Ig) E receptor alpha chain respond to human IgE in mast cell degranulation and in allergic reactions.</title>
        <authorList>
            <person name="Fung-Leung W.P."/>
            <person name="De Sousa-Hitzler J."/>
            <person name="Ishaque A."/>
            <person name="Zhou L."/>
            <person name="Pang J."/>
            <person name="Ngo K."/>
            <person name="Panakos J.A."/>
            <person name="Chourmouzis E."/>
            <person name="Liu F.T."/>
            <person name="Lau C.Y."/>
        </authorList>
    </citation>
    <scope>FUNCTION (ISOFORM 1)</scope>
</reference>
<reference key="15">
    <citation type="journal article" date="1996" name="J. Exp. Med.">
        <title>The two membrane isoforms of human IgE assemble into functionally distinct B cell antigen receptors.</title>
        <authorList>
            <person name="Batista F.D."/>
            <person name="Anand S."/>
            <person name="Presani G."/>
            <person name="Efremov D.G."/>
            <person name="Burrone O.R."/>
        </authorList>
    </citation>
    <scope>FUNCTION (ISOFORMS 2 AND 3)</scope>
    <scope>SUBUNIT (ISOFORMS 2 AND 3)</scope>
    <scope>SUBCELLULAR LOCATION (ISOFORMS 2 AND 3)</scope>
</reference>
<reference key="16">
    <citation type="journal article" date="2005" name="J. Exp. Med.">
        <title>The structure of human CD23 and its interactions with IgE and CD21.</title>
        <authorList>
            <person name="Hibbert R.G."/>
            <person name="Teriete P."/>
            <person name="Grundy G.J."/>
            <person name="Beavil R.L."/>
            <person name="Reljic R."/>
            <person name="Holers V.M."/>
            <person name="Hannan J.P."/>
            <person name="Sutton B.J."/>
            <person name="Gould H.J."/>
            <person name="McDonnell J.M."/>
        </authorList>
    </citation>
    <scope>INTERACTION WITH FCER2 (ISOFORM 1)</scope>
</reference>
<reference key="17">
    <citation type="journal article" date="2010" name="J. Clin. Invest.">
        <title>Antibodies specific for a segment of human membrane IgE deplete IgE-producing B cells in humanized mice.</title>
        <authorList>
            <person name="Brightbill H.D."/>
            <person name="Jeet S."/>
            <person name="Lin Z."/>
            <person name="Yan D."/>
            <person name="Zhou M."/>
            <person name="Tan M."/>
            <person name="Nguyen A."/>
            <person name="Yeh S."/>
            <person name="Delarosa D."/>
            <person name="Leong S.R."/>
            <person name="Wong T."/>
            <person name="Chen Y."/>
            <person name="Ultsch M."/>
            <person name="Luis E."/>
            <person name="Ramani S.R."/>
            <person name="Jackman J."/>
            <person name="Gonzalez L."/>
            <person name="Dennis M.S."/>
            <person name="Chuntharapai A."/>
            <person name="DeForge L."/>
            <person name="Meng Y.G."/>
            <person name="Xu M."/>
            <person name="Eigenbrot C."/>
            <person name="Lee W.P."/>
            <person name="Refino C.J."/>
            <person name="Balazs M."/>
            <person name="Wu L.C."/>
        </authorList>
    </citation>
    <scope>FUNCTION (ISOFORM 2)</scope>
    <scope>SUBCELLULAR LOCATION (ISOFORM 2)</scope>
</reference>
<reference key="18">
    <citation type="journal article" date="2015" name="Nat. Commun.">
        <title>Mast cells form antibody-dependent degranulatory synapse for dedicated secretion and defence.</title>
        <authorList>
            <person name="Joulia R."/>
            <person name="Gaudenzio N."/>
            <person name="Rodrigues M."/>
            <person name="Lopez J."/>
            <person name="Blanchard N."/>
            <person name="Valitutti S."/>
            <person name="Espinosa E."/>
        </authorList>
    </citation>
    <scope>FUNCTION (ISOFORM 1)</scope>
</reference>
<reference key="19">
    <citation type="journal article" date="2019" name="EBioMedicine">
        <title>IgE re-programs alternatively-activated human macrophages towards pro-inflammatory anti-tumoural states.</title>
        <authorList>
            <person name="Pellizzari G."/>
            <person name="Hoskin C."/>
            <person name="Crescioli S."/>
            <person name="Mele S."/>
            <person name="Gotovina J."/>
            <person name="Chiaruttini G."/>
            <person name="Bianchini R."/>
            <person name="Ilieva K."/>
            <person name="Bax H.J."/>
            <person name="Papa S."/>
            <person name="Lacy K.E."/>
            <person name="Jensen-Jarolim E."/>
            <person name="Tsoka S."/>
            <person name="Josephs D.H."/>
            <person name="Spicer J.F."/>
            <person name="Karagiannis S.N."/>
        </authorList>
    </citation>
    <scope>FUNCTION (ISOFORM 1)</scope>
</reference>
<reference key="20">
    <citation type="journal article" date="2022" name="Allergy">
        <title>IgE antibodies increase honeybee venom responsiveness and detoxification efficiency of mast cells.</title>
        <authorList>
            <person name="Starkl P."/>
            <person name="Gaudenzio N."/>
            <person name="Marichal T."/>
            <person name="Reber L.L."/>
            <person name="Sibilano R."/>
            <person name="Watzenboeck M.L."/>
            <person name="Fontaine F."/>
            <person name="Mueller A.C."/>
            <person name="Tsai M."/>
            <person name="Knapp S."/>
            <person name="Galli S.J."/>
        </authorList>
    </citation>
    <scope>FUNCTION (ISOFORM 1)</scope>
</reference>
<reference key="21">
    <citation type="journal article" date="2001" name="Exp. Clin. Immunogenet.">
        <title>Nomenclature of the human immunoglobulin heavy (IGH) genes.</title>
        <authorList>
            <person name="Lefranc M.P."/>
        </authorList>
    </citation>
    <scope>NOMENCLATURE</scope>
</reference>
<reference key="22">
    <citation type="book" date="2001" name="The Immunoglobulin FactsBook.">
        <title>The Immunoglobulin FactsBook.</title>
        <editorList>
            <person name="Lefranc M.P."/>
            <person name="Lefranc G."/>
        </editorList>
        <authorList>
            <person name="Lefranc M.P."/>
            <person name="Lefranc G."/>
        </authorList>
    </citation>
    <scope>NOMENCLATURE</scope>
</reference>
<reference key="23">
    <citation type="journal article" date="2007" name="Annu. Rev. Genet.">
        <title>Immunoglobulin somatic hypermutation.</title>
        <authorList>
            <person name="Teng G."/>
            <person name="Papavasiliou F.N."/>
        </authorList>
    </citation>
    <scope>REVIEW ON SOMATIC HYPERMUTATION</scope>
</reference>
<reference key="24">
    <citation type="journal article" date="2010" name="J. Allergy Clin. Immunol.">
        <title>Structure and function of immunoglobulins.</title>
        <authorList>
            <person name="Schroeder H.W. Jr."/>
            <person name="Cavacini L."/>
        </authorList>
    </citation>
    <scope>REVIEW ON IMMUNOGLOBULINS</scope>
</reference>
<reference key="25">
    <citation type="journal article" date="2012" name="Nat. Rev. Immunol.">
        <title>Molecular programming of B cell memory.</title>
        <authorList>
            <person name="McHeyzer-Williams M."/>
            <person name="Okitsu S."/>
            <person name="Wang N."/>
            <person name="McHeyzer-Williams L."/>
        </authorList>
    </citation>
    <scope>REVIEW ON FUNCTION</scope>
</reference>
<reference key="26">
    <citation type="journal article" date="1986" name="Mol. Immunol.">
        <title>A model of the Fc of immunoglobulin E.</title>
        <authorList>
            <person name="Padlan E.A."/>
            <person name="Davies D.R."/>
        </authorList>
    </citation>
    <scope>3D-STRUCTURE MODELING</scope>
</reference>
<reference key="27">
    <citation type="journal article" date="2000" name="Nature">
        <title>Structure of the Fc fragment of human IgE bound to its high-affinity receptor Fc epsilonRI alpha.</title>
        <authorList>
            <person name="Garman S.C."/>
            <person name="Wurzburg B.A."/>
            <person name="Tarchevskaya S.S."/>
            <person name="Kinet J.P."/>
            <person name="Jardetzky T.S."/>
        </authorList>
    </citation>
    <scope>X-RAY CRYSTALLOGRAPHY (3.50 ANGSTROMS) OF 211-428 IN COMPLEX WITH FCER1A (ISOFORM 1)</scope>
    <scope>DISULFIDE BOND</scope>
    <scope>GLYCOSYLATION AT ASN-275</scope>
</reference>
<feature type="chain" id="PRO_0000153574" description="Immunoglobulin heavy constant epsilon">
    <location>
        <begin position="1" status="less than"/>
        <end position="546"/>
    </location>
</feature>
<feature type="topological domain" description="Extracellular" evidence="25">
    <location>
        <begin position="1"/>
        <end position="499"/>
    </location>
</feature>
<feature type="transmembrane region" description="Helical" evidence="1">
    <location>
        <begin position="500"/>
        <end position="520"/>
    </location>
</feature>
<feature type="topological domain" description="Cytoplasmic" evidence="25">
    <location>
        <begin position="521"/>
        <end position="546"/>
    </location>
</feature>
<feature type="domain" description="Ig-like 1" evidence="2">
    <location>
        <begin position="6"/>
        <end position="103"/>
    </location>
</feature>
<feature type="domain" description="Ig-like 2" evidence="2">
    <location>
        <begin position="112"/>
        <end position="210"/>
    </location>
</feature>
<feature type="domain" description="Ig-like 3" evidence="2">
    <location>
        <begin position="214"/>
        <end position="318"/>
    </location>
</feature>
<feature type="domain" description="Ig-like 4" evidence="2">
    <location>
        <begin position="324"/>
        <end position="423"/>
    </location>
</feature>
<feature type="glycosylation site" description="N-linked (GlcNAc...) asparagine" evidence="1">
    <location>
        <position position="21"/>
    </location>
</feature>
<feature type="glycosylation site" description="N-linked (GlcNAc...) asparagine" evidence="1">
    <location>
        <position position="49"/>
    </location>
</feature>
<feature type="glycosylation site" description="N-linked (GlcNAc...) asparagine" evidence="1">
    <location>
        <position position="99"/>
    </location>
</feature>
<feature type="glycosylation site" description="N-linked (GlcNAc...) asparagine" evidence="1">
    <location>
        <position position="146"/>
    </location>
</feature>
<feature type="glycosylation site" description="N-linked (GlcNAc...) asparagine" evidence="1">
    <location>
        <position position="252"/>
    </location>
</feature>
<feature type="glycosylation site" description="N-linked (GlcNAc...) asparagine" evidence="1">
    <location>
        <position position="264"/>
    </location>
</feature>
<feature type="glycosylation site" description="N-linked (GlcNAc...) asparagine" evidence="3">
    <location>
        <position position="275"/>
    </location>
</feature>
<feature type="disulfide bond" description="Interchain (with a light chain)">
    <location>
        <position position="14"/>
    </location>
</feature>
<feature type="disulfide bond">
    <location>
        <begin position="15"/>
        <end position="105"/>
    </location>
</feature>
<feature type="disulfide bond" evidence="2">
    <location>
        <begin position="29"/>
        <end position="85"/>
    </location>
</feature>
<feature type="disulfide bond" description="Interchain (with a heavy chain)">
    <location>
        <position position="121"/>
    </location>
</feature>
<feature type="disulfide bond" evidence="2">
    <location>
        <begin position="135"/>
        <end position="193"/>
    </location>
</feature>
<feature type="disulfide bond" description="Interchain (with a heavy chain)">
    <location>
        <position position="209"/>
    </location>
</feature>
<feature type="disulfide bond" evidence="2 3">
    <location>
        <begin position="239"/>
        <end position="299"/>
    </location>
</feature>
<feature type="disulfide bond" evidence="2 3">
    <location>
        <begin position="345"/>
        <end position="405"/>
    </location>
</feature>
<feature type="splice variant" id="VSP_061834" description="In isoform 3.">
    <location>
        <begin position="426"/>
        <end position="477"/>
    </location>
</feature>
<feature type="splice variant" id="VSP_061835" description="In isoform 1.">
    <original>L</original>
    <variation>K</variation>
    <location>
        <position position="428"/>
    </location>
</feature>
<feature type="splice variant" id="VSP_061836" description="In isoform 1.">
    <location>
        <begin position="429"/>
        <end position="546"/>
    </location>
</feature>
<feature type="sequence variant" id="VAR_044229" description="In IMGT allele IGHE*01." evidence="12">
    <original>W</original>
    <variation>C</variation>
    <location>
        <position position="43"/>
    </location>
</feature>
<feature type="sequence variant" id="VAR_003885" evidence="11">
    <original>W</original>
    <variation>L</variation>
    <location>
        <position position="359"/>
    </location>
</feature>
<feature type="sequence conflict" description="In Ref. 1; AA sequence." evidence="25" ref="1">
    <original>ASTQS</original>
    <variation>GAWTL</variation>
    <location>
        <begin position="1"/>
        <end position="5"/>
    </location>
</feature>
<feature type="sequence conflict" description="In Ref. 1; AA sequence." evidence="25" ref="1">
    <location>
        <begin position="53"/>
        <end position="54"/>
    </location>
</feature>
<feature type="sequence conflict" description="In Ref. 1; AA sequence." evidence="25" ref="1">
    <location>
        <begin position="93"/>
        <end position="94"/>
    </location>
</feature>
<feature type="sequence conflict" description="In Ref. 1; AA sequence." evidence="25" ref="1">
    <original>G</original>
    <variation>L</variation>
    <location>
        <position position="124"/>
    </location>
</feature>
<feature type="sequence conflict" description="In Ref. 1; AA sequence." evidence="25" ref="1">
    <original>TQE</original>
    <variation>ESQ</variation>
    <location>
        <begin position="166"/>
        <end position="168"/>
    </location>
</feature>
<feature type="sequence conflict" description="In Ref. 1; AA sequence." evidence="25" ref="1">
    <original>Q</original>
    <variation>E</variation>
    <location>
        <position position="175"/>
    </location>
</feature>
<feature type="sequence conflict" description="In Ref. 1; AA sequence." evidence="25" ref="1">
    <original>E</original>
    <variation>Q</variation>
    <location>
        <position position="177"/>
    </location>
</feature>
<feature type="sequence conflict" description="In Ref. 1; AA sequence." evidence="25" ref="1">
    <original>E</original>
    <variation>Q</variation>
    <location>
        <position position="203"/>
    </location>
</feature>
<feature type="sequence conflict" description="In Ref. 1; AA sequence." evidence="25" ref="1">
    <original>EQ</original>
    <variation>QE</variation>
    <location>
        <begin position="398"/>
        <end position="399"/>
    </location>
</feature>
<feature type="non-terminal residue">
    <location>
        <position position="1"/>
    </location>
</feature>
<feature type="strand" evidence="34">
    <location>
        <begin position="115"/>
        <end position="119"/>
    </location>
</feature>
<feature type="strand" evidence="31">
    <location>
        <begin position="125"/>
        <end position="127"/>
    </location>
</feature>
<feature type="strand" evidence="34">
    <location>
        <begin position="129"/>
        <end position="140"/>
    </location>
</feature>
<feature type="strand" evidence="34">
    <location>
        <begin position="145"/>
        <end position="151"/>
    </location>
</feature>
<feature type="strand" evidence="33">
    <location>
        <begin position="154"/>
        <end position="156"/>
    </location>
</feature>
<feature type="helix" evidence="34">
    <location>
        <begin position="158"/>
        <end position="160"/>
    </location>
</feature>
<feature type="strand" evidence="34">
    <location>
        <begin position="161"/>
        <end position="168"/>
    </location>
</feature>
<feature type="strand" evidence="34">
    <location>
        <begin position="171"/>
        <end position="181"/>
    </location>
</feature>
<feature type="helix" evidence="34">
    <location>
        <begin position="182"/>
        <end position="186"/>
    </location>
</feature>
<feature type="strand" evidence="34">
    <location>
        <begin position="191"/>
        <end position="197"/>
    </location>
</feature>
<feature type="strand" evidence="34">
    <location>
        <begin position="200"/>
        <end position="206"/>
    </location>
</feature>
<feature type="helix" evidence="34">
    <location>
        <begin position="214"/>
        <end position="216"/>
    </location>
</feature>
<feature type="strand" evidence="34">
    <location>
        <begin position="218"/>
        <end position="221"/>
    </location>
</feature>
<feature type="helix" evidence="34">
    <location>
        <begin position="226"/>
        <end position="230"/>
    </location>
</feature>
<feature type="strand" evidence="34">
    <location>
        <begin position="236"/>
        <end position="244"/>
    </location>
</feature>
<feature type="strand" evidence="34">
    <location>
        <begin position="252"/>
        <end position="257"/>
    </location>
</feature>
<feature type="strand" evidence="34">
    <location>
        <begin position="269"/>
        <end position="272"/>
    </location>
</feature>
<feature type="turn" evidence="32">
    <location>
        <begin position="274"/>
        <end position="276"/>
    </location>
</feature>
<feature type="strand" evidence="34">
    <location>
        <begin position="278"/>
        <end position="285"/>
    </location>
</feature>
<feature type="helix" evidence="34">
    <location>
        <begin position="288"/>
        <end position="292"/>
    </location>
</feature>
<feature type="strand" evidence="34">
    <location>
        <begin position="297"/>
        <end position="302"/>
    </location>
</feature>
<feature type="strand" evidence="34">
    <location>
        <begin position="306"/>
        <end position="308"/>
    </location>
</feature>
<feature type="strand" evidence="34">
    <location>
        <begin position="310"/>
        <end position="314"/>
    </location>
</feature>
<feature type="strand" evidence="34">
    <location>
        <begin position="325"/>
        <end position="330"/>
    </location>
</feature>
<feature type="strand" evidence="30">
    <location>
        <begin position="335"/>
        <end position="338"/>
    </location>
</feature>
<feature type="strand" evidence="34">
    <location>
        <begin position="340"/>
        <end position="353"/>
    </location>
</feature>
<feature type="strand" evidence="34">
    <location>
        <begin position="356"/>
        <end position="361"/>
    </location>
</feature>
<feature type="helix" evidence="34">
    <location>
        <begin position="368"/>
        <end position="370"/>
    </location>
</feature>
<feature type="strand" evidence="34">
    <location>
        <begin position="371"/>
        <end position="373"/>
    </location>
</feature>
<feature type="strand" evidence="34">
    <location>
        <begin position="380"/>
        <end position="393"/>
    </location>
</feature>
<feature type="helix" evidence="34">
    <location>
        <begin position="394"/>
        <end position="399"/>
    </location>
</feature>
<feature type="strand" evidence="34">
    <location>
        <begin position="403"/>
        <end position="408"/>
    </location>
</feature>
<feature type="strand" evidence="29">
    <location>
        <begin position="410"/>
        <end position="412"/>
    </location>
</feature>
<feature type="turn" evidence="34">
    <location>
        <begin position="413"/>
        <end position="415"/>
    </location>
</feature>
<feature type="strand" evidence="34">
    <location>
        <begin position="416"/>
        <end position="422"/>
    </location>
</feature>
<name>IGHE_HUMAN</name>
<organism>
    <name type="scientific">Homo sapiens</name>
    <name type="common">Human</name>
    <dbReference type="NCBI Taxonomy" id="9606"/>
    <lineage>
        <taxon>Eukaryota</taxon>
        <taxon>Metazoa</taxon>
        <taxon>Chordata</taxon>
        <taxon>Craniata</taxon>
        <taxon>Vertebrata</taxon>
        <taxon>Euteleostomi</taxon>
        <taxon>Mammalia</taxon>
        <taxon>Eutheria</taxon>
        <taxon>Euarchontoglires</taxon>
        <taxon>Primates</taxon>
        <taxon>Haplorrhini</taxon>
        <taxon>Catarrhini</taxon>
        <taxon>Hominidae</taxon>
        <taxon>Homo</taxon>
    </lineage>
</organism>
<dbReference type="EMBL" id="L00022">
    <property type="protein sequence ID" value="AAB59424.1"/>
    <property type="status" value="ALT_INIT"/>
    <property type="molecule type" value="Genomic_DNA"/>
</dbReference>
<dbReference type="EMBL" id="J00222">
    <property type="protein sequence ID" value="AAB59395.1"/>
    <property type="status" value="ALT_INIT"/>
    <property type="molecule type" value="Genomic_DNA"/>
</dbReference>
<dbReference type="EMBL" id="AL928742">
    <property type="status" value="NOT_ANNOTATED_CDS"/>
    <property type="molecule type" value="Genomic_DNA"/>
</dbReference>
<dbReference type="EMBL" id="X63693">
    <property type="status" value="NOT_ANNOTATED_CDS"/>
    <property type="molecule type" value="Genomic_DNA"/>
</dbReference>
<dbReference type="PIR" id="A22771">
    <property type="entry name" value="EHHU"/>
</dbReference>
<dbReference type="PDB" id="1F6A">
    <property type="method" value="X-ray"/>
    <property type="resolution" value="3.50 A"/>
    <property type="chains" value="B/D=211-428"/>
</dbReference>
<dbReference type="PDB" id="1FP5">
    <property type="method" value="X-ray"/>
    <property type="resolution" value="2.30 A"/>
    <property type="chains" value="A=211-428"/>
</dbReference>
<dbReference type="PDB" id="1G84">
    <property type="method" value="NMR"/>
    <property type="chains" value="A=106-208"/>
</dbReference>
<dbReference type="PDB" id="1O0V">
    <property type="method" value="X-ray"/>
    <property type="resolution" value="2.60 A"/>
    <property type="chains" value="A/B=104-427"/>
</dbReference>
<dbReference type="PDB" id="2WQR">
    <property type="method" value="X-ray"/>
    <property type="resolution" value="1.90 A"/>
    <property type="chains" value="A/B=105-427"/>
</dbReference>
<dbReference type="PDB" id="2Y7Q">
    <property type="method" value="X-ray"/>
    <property type="resolution" value="3.40 A"/>
    <property type="chains" value="B/D=104-428"/>
</dbReference>
<dbReference type="PDB" id="3H9Y">
    <property type="method" value="X-ray"/>
    <property type="resolution" value="2.23 A"/>
    <property type="chains" value="A/B/E=209-428"/>
</dbReference>
<dbReference type="PDB" id="3H9Z">
    <property type="method" value="X-ray"/>
    <property type="resolution" value="2.45 A"/>
    <property type="chains" value="A/B/C/D=209-428"/>
</dbReference>
<dbReference type="PDB" id="3HA0">
    <property type="method" value="X-ray"/>
    <property type="resolution" value="2.80 A"/>
    <property type="chains" value="A/B/C/D/E/F=209-428"/>
</dbReference>
<dbReference type="PDB" id="4EZM">
    <property type="method" value="X-ray"/>
    <property type="resolution" value="3.10 A"/>
    <property type="chains" value="A/B/C/D/E/F=209-428"/>
</dbReference>
<dbReference type="PDB" id="4GKO">
    <property type="method" value="X-ray"/>
    <property type="resolution" value="3.30 A"/>
    <property type="chains" value="A/B/C/D/E/F=209-428"/>
</dbReference>
<dbReference type="PDB" id="4GRG">
    <property type="method" value="X-ray"/>
    <property type="resolution" value="4.24 A"/>
    <property type="chains" value="C/D=210-428"/>
</dbReference>
<dbReference type="PDB" id="4GT7">
    <property type="method" value="X-ray"/>
    <property type="resolution" value="2.61 A"/>
    <property type="chains" value="A/B/C/D=210-426"/>
</dbReference>
<dbReference type="PDB" id="4J4P">
    <property type="method" value="X-ray"/>
    <property type="resolution" value="2.91 A"/>
    <property type="chains" value="A/B=105-427"/>
</dbReference>
<dbReference type="PDB" id="4KI1">
    <property type="method" value="X-ray"/>
    <property type="resolution" value="3.20 A"/>
    <property type="chains" value="A/B/C/D=209-428"/>
</dbReference>
<dbReference type="PDB" id="5ANM">
    <property type="method" value="X-ray"/>
    <property type="resolution" value="2.85 A"/>
    <property type="chains" value="E/F/G=211-428"/>
</dbReference>
<dbReference type="PDB" id="5HYS">
    <property type="method" value="X-ray"/>
    <property type="resolution" value="2.50 A"/>
    <property type="chains" value="G/I/J/K=209-428"/>
</dbReference>
<dbReference type="PDB" id="5LGJ">
    <property type="method" value="X-ray"/>
    <property type="resolution" value="2.60 A"/>
    <property type="chains" value="A=108-426, B=108-427"/>
</dbReference>
<dbReference type="PDB" id="5LGK">
    <property type="method" value="X-ray"/>
    <property type="resolution" value="3.50 A"/>
    <property type="chains" value="A/B/C/D=114-421"/>
</dbReference>
<dbReference type="PDB" id="5MOI">
    <property type="method" value="X-ray"/>
    <property type="resolution" value="2.20 A"/>
    <property type="chains" value="A/B/C/D/E/F=209-428"/>
</dbReference>
<dbReference type="PDB" id="5MOJ">
    <property type="method" value="X-ray"/>
    <property type="resolution" value="2.26 A"/>
    <property type="chains" value="A/B=209-428"/>
</dbReference>
<dbReference type="PDB" id="5MOK">
    <property type="method" value="X-ray"/>
    <property type="resolution" value="2.00 A"/>
    <property type="chains" value="A/B/C/D=209-428"/>
</dbReference>
<dbReference type="PDB" id="5MOL">
    <property type="method" value="X-ray"/>
    <property type="resolution" value="1.75 A"/>
    <property type="chains" value="A/B=104-428"/>
</dbReference>
<dbReference type="PDB" id="5NQW">
    <property type="method" value="X-ray"/>
    <property type="resolution" value="3.40 A"/>
    <property type="chains" value="A/B=215-426"/>
</dbReference>
<dbReference type="PDB" id="6EYO">
    <property type="method" value="X-ray"/>
    <property type="resolution" value="3.70 A"/>
    <property type="chains" value="A/B=104-428"/>
</dbReference>
<dbReference type="PDB" id="6UQR">
    <property type="method" value="X-ray"/>
    <property type="resolution" value="3.65 A"/>
    <property type="chains" value="B/D=209-426"/>
</dbReference>
<dbReference type="PDB" id="7MXI">
    <property type="method" value="X-ray"/>
    <property type="resolution" value="2.80 A"/>
    <property type="chains" value="A/B=209-426"/>
</dbReference>
<dbReference type="PDB" id="7SHT">
    <property type="method" value="EM"/>
    <property type="resolution" value="7.29 A"/>
    <property type="chains" value="B/D=109-428"/>
</dbReference>
<dbReference type="PDB" id="7SHU">
    <property type="method" value="X-ray"/>
    <property type="resolution" value="2.75 A"/>
    <property type="chains" value="A/B=209-426"/>
</dbReference>
<dbReference type="PDB" id="7SHY">
    <property type="method" value="X-ray"/>
    <property type="resolution" value="3.00 A"/>
    <property type="chains" value="A/B/G/H=209-426"/>
</dbReference>
<dbReference type="PDB" id="7SHZ">
    <property type="method" value="X-ray"/>
    <property type="resolution" value="3.00 A"/>
    <property type="chains" value="A/B/G/H=209-426"/>
</dbReference>
<dbReference type="PDB" id="7SI0">
    <property type="method" value="X-ray"/>
    <property type="resolution" value="3.00 A"/>
    <property type="chains" value="A/B/G/H=209-426"/>
</dbReference>
<dbReference type="PDB" id="8C1B">
    <property type="method" value="EM"/>
    <property type="resolution" value="3.80 A"/>
    <property type="chains" value="H/X=108-423"/>
</dbReference>
<dbReference type="PDB" id="8C1C">
    <property type="method" value="EM"/>
    <property type="resolution" value="4.10 A"/>
    <property type="chains" value="H/X=1-423"/>
</dbReference>
<dbReference type="PDB" id="8Z0T">
    <property type="method" value="EM"/>
    <property type="resolution" value="3.58 A"/>
    <property type="chains" value="D/E=106-427"/>
</dbReference>
<dbReference type="PDBsum" id="1F6A"/>
<dbReference type="PDBsum" id="1FP5"/>
<dbReference type="PDBsum" id="1G84"/>
<dbReference type="PDBsum" id="1O0V"/>
<dbReference type="PDBsum" id="2WQR"/>
<dbReference type="PDBsum" id="2Y7Q"/>
<dbReference type="PDBsum" id="3H9Y"/>
<dbReference type="PDBsum" id="3H9Z"/>
<dbReference type="PDBsum" id="3HA0"/>
<dbReference type="PDBsum" id="4EZM"/>
<dbReference type="PDBsum" id="4GKO"/>
<dbReference type="PDBsum" id="4GRG"/>
<dbReference type="PDBsum" id="4GT7"/>
<dbReference type="PDBsum" id="4J4P"/>
<dbReference type="PDBsum" id="4KI1"/>
<dbReference type="PDBsum" id="5ANM"/>
<dbReference type="PDBsum" id="5HYS"/>
<dbReference type="PDBsum" id="5LGJ"/>
<dbReference type="PDBsum" id="5LGK"/>
<dbReference type="PDBsum" id="5MOI"/>
<dbReference type="PDBsum" id="5MOJ"/>
<dbReference type="PDBsum" id="5MOK"/>
<dbReference type="PDBsum" id="5MOL"/>
<dbReference type="PDBsum" id="5NQW"/>
<dbReference type="PDBsum" id="6EYO"/>
<dbReference type="PDBsum" id="6UQR"/>
<dbReference type="PDBsum" id="7MXI"/>
<dbReference type="PDBsum" id="7SHT"/>
<dbReference type="PDBsum" id="7SHU"/>
<dbReference type="PDBsum" id="7SHY"/>
<dbReference type="PDBsum" id="7SHZ"/>
<dbReference type="PDBsum" id="7SI0"/>
<dbReference type="PDBsum" id="8C1B"/>
<dbReference type="PDBsum" id="8C1C"/>
<dbReference type="PDBsum" id="8Z0T"/>
<dbReference type="EMDB" id="EMD-16377"/>
<dbReference type="EMDB" id="EMD-16378"/>
<dbReference type="EMDB" id="EMD-25136"/>
<dbReference type="EMDB" id="EMD-36939"/>
<dbReference type="SMR" id="P01854"/>
<dbReference type="ComplexPortal" id="CPX-6969">
    <property type="entry name" value="IgE - Ig kappa immunoglobulin complex, constant regions"/>
</dbReference>
<dbReference type="ComplexPortal" id="CPX-6970">
    <property type="entry name" value="IgE - Ig lambda 1 immunoglobulin complex, constant regions"/>
</dbReference>
<dbReference type="ComplexPortal" id="CPX-6971">
    <property type="entry name" value="IgE - Ig lambda 2 immunoglobulin complex, constant regions"/>
</dbReference>
<dbReference type="ComplexPortal" id="CPX-6972">
    <property type="entry name" value="IgE - Ig lambda 3 immunoglobulin complex, constant regions"/>
</dbReference>
<dbReference type="ComplexPortal" id="CPX-6973">
    <property type="entry name" value="IgE - Ig lambda 6 immunoglobulin complex, constant regions"/>
</dbReference>
<dbReference type="ComplexPortal" id="CPX-6974">
    <property type="entry name" value="IgE - Ig lambda 7 immunoglobulin complex, constant regions"/>
</dbReference>
<dbReference type="DIP" id="DIP-6167N"/>
<dbReference type="FunCoup" id="P01854">
    <property type="interactions" value="58"/>
</dbReference>
<dbReference type="ChEMBL" id="CHEMBL1834"/>
<dbReference type="DrugBank" id="DB11856">
    <property type="generic name" value="Ligelizumab"/>
</dbReference>
<dbReference type="DrugBank" id="DB00043">
    <property type="generic name" value="Omalizumab"/>
</dbReference>
<dbReference type="DrugCentral" id="P01854"/>
<dbReference type="GuidetoPHARMACOLOGY" id="2741"/>
<dbReference type="IMGT_GENE-DB" id="IGHE"/>
<dbReference type="GlyConnect" id="2970">
    <property type="glycosylation" value="39 N-Linked glycans"/>
</dbReference>
<dbReference type="GlyConnect" id="2971">
    <property type="glycosylation" value="38 N-Linked glycans"/>
</dbReference>
<dbReference type="GlyConnect" id="765">
    <property type="glycosylation" value="104 N-Linked glycans (7 sites)"/>
</dbReference>
<dbReference type="GlyCosmos" id="P01854">
    <property type="glycosylation" value="7 sites, 126 glycans"/>
</dbReference>
<dbReference type="GlyGen" id="P01854">
    <property type="glycosylation" value="8 sites, 93 N-linked glycans (8 sites)"/>
</dbReference>
<dbReference type="iPTMnet" id="P01854"/>
<dbReference type="PhosphoSitePlus" id="P01854"/>
<dbReference type="BioMuta" id="IGHE"/>
<dbReference type="DMDM" id="119512"/>
<dbReference type="jPOST" id="P01854"/>
<dbReference type="MassIVE" id="P01854"/>
<dbReference type="PeptideAtlas" id="P01854"/>
<dbReference type="ProteomicsDB" id="51493"/>
<dbReference type="ABCD" id="P01854">
    <property type="antibodies" value="117 sequenced antibodies"/>
</dbReference>
<dbReference type="Ensembl" id="ENST00000390541.2">
    <molecule id="P01854-1"/>
    <property type="protein sequence ID" value="ENSP00000374983.2"/>
    <property type="gene ID" value="ENSG00000211891.6"/>
</dbReference>
<dbReference type="Ensembl" id="ENST00000610670.2">
    <molecule id="P01854-1"/>
    <property type="protein sequence ID" value="ENSP00000481089.1"/>
    <property type="gene ID" value="ENSG00000276192.2"/>
</dbReference>
<dbReference type="Ensembl" id="ENST00000641420.1">
    <molecule id="P01854-3"/>
    <property type="protein sequence ID" value="ENSP00000492979.1"/>
    <property type="gene ID" value="ENSG00000211891.6"/>
</dbReference>
<dbReference type="UCSC" id="uc059gcp.1">
    <molecule id="P01854-2"/>
    <property type="organism name" value="human"/>
</dbReference>
<dbReference type="AGR" id="HGNC:5522"/>
<dbReference type="GeneCards" id="IGHE"/>
<dbReference type="HGNC" id="HGNC:5522">
    <property type="gene designation" value="IGHE"/>
</dbReference>
<dbReference type="HPA" id="ENSG00000211891">
    <property type="expression patterns" value="Not detected"/>
</dbReference>
<dbReference type="MIM" id="147180">
    <property type="type" value="gene"/>
</dbReference>
<dbReference type="neXtProt" id="NX_P01854"/>
<dbReference type="OpenTargets" id="ENSG00000211891"/>
<dbReference type="VEuPathDB" id="HostDB:ENSG00000211891"/>
<dbReference type="GeneTree" id="ENSGT00940000163076"/>
<dbReference type="HOGENOM" id="CLU_030625_0_2_1"/>
<dbReference type="InParanoid" id="P01854"/>
<dbReference type="OMA" id="ITQGQWV"/>
<dbReference type="OrthoDB" id="8694217at2759"/>
<dbReference type="PAN-GO" id="P01854">
    <property type="GO annotations" value="11 GO annotations based on evolutionary models"/>
</dbReference>
<dbReference type="PhylomeDB" id="P01854"/>
<dbReference type="TreeFam" id="TF334176"/>
<dbReference type="PathwayCommons" id="P01854"/>
<dbReference type="Reactome" id="R-HSA-2454202">
    <property type="pathway name" value="Fc epsilon receptor (FCERI) signaling"/>
</dbReference>
<dbReference type="Reactome" id="R-HSA-2730905">
    <property type="pathway name" value="Role of LAT2/NTAL/LAB on calcium mobilization"/>
</dbReference>
<dbReference type="Reactome" id="R-HSA-2871796">
    <property type="pathway name" value="FCERI mediated MAPK activation"/>
</dbReference>
<dbReference type="Reactome" id="R-HSA-2871809">
    <property type="pathway name" value="FCERI mediated Ca+2 mobilization"/>
</dbReference>
<dbReference type="Reactome" id="R-HSA-2871837">
    <property type="pathway name" value="FCERI mediated NF-kB activation"/>
</dbReference>
<dbReference type="Reactome" id="R-HSA-6785807">
    <property type="pathway name" value="Interleukin-4 and Interleukin-13 signaling"/>
</dbReference>
<dbReference type="SignaLink" id="P01854"/>
<dbReference type="EvolutionaryTrace" id="P01854"/>
<dbReference type="Pharos" id="P01854">
    <property type="development level" value="Tclin"/>
</dbReference>
<dbReference type="PRO" id="PR:P01854"/>
<dbReference type="Proteomes" id="UP000005640">
    <property type="component" value="Chromosome 14"/>
</dbReference>
<dbReference type="RNAct" id="P01854">
    <property type="molecule type" value="protein"/>
</dbReference>
<dbReference type="Bgee" id="ENSG00000211891">
    <property type="expression patterns" value="Expressed in male germ line stem cell (sensu Vertebrata) in testis and 73 other cell types or tissues"/>
</dbReference>
<dbReference type="ExpressionAtlas" id="P01854">
    <property type="expression patterns" value="baseline and differential"/>
</dbReference>
<dbReference type="GO" id="GO:0005576">
    <property type="term" value="C:extracellular region"/>
    <property type="evidence" value="ECO:0000304"/>
    <property type="project" value="Reactome"/>
</dbReference>
<dbReference type="GO" id="GO:0005615">
    <property type="term" value="C:extracellular space"/>
    <property type="evidence" value="ECO:0000314"/>
    <property type="project" value="UniProtKB"/>
</dbReference>
<dbReference type="GO" id="GO:0071744">
    <property type="term" value="C:IgE B cell receptor complex"/>
    <property type="evidence" value="ECO:0000314"/>
    <property type="project" value="UniProtKB"/>
</dbReference>
<dbReference type="GO" id="GO:0071742">
    <property type="term" value="C:IgE immunoglobulin complex"/>
    <property type="evidence" value="ECO:0000303"/>
    <property type="project" value="ComplexPortal"/>
</dbReference>
<dbReference type="GO" id="GO:0042571">
    <property type="term" value="C:immunoglobulin complex, circulating"/>
    <property type="evidence" value="ECO:0000318"/>
    <property type="project" value="GO_Central"/>
</dbReference>
<dbReference type="GO" id="GO:0005886">
    <property type="term" value="C:plasma membrane"/>
    <property type="evidence" value="ECO:0000314"/>
    <property type="project" value="UniProtKB"/>
</dbReference>
<dbReference type="GO" id="GO:0003823">
    <property type="term" value="F:antigen binding"/>
    <property type="evidence" value="ECO:0000318"/>
    <property type="project" value="GO_Central"/>
</dbReference>
<dbReference type="GO" id="GO:0034987">
    <property type="term" value="F:immunoglobulin receptor binding"/>
    <property type="evidence" value="ECO:0000314"/>
    <property type="project" value="UniProtKB"/>
</dbReference>
<dbReference type="GO" id="GO:0090716">
    <property type="term" value="P:adaptive immune memory response"/>
    <property type="evidence" value="ECO:0000315"/>
    <property type="project" value="UniProtKB"/>
</dbReference>
<dbReference type="GO" id="GO:0002250">
    <property type="term" value="P:adaptive immune response"/>
    <property type="evidence" value="ECO:0000303"/>
    <property type="project" value="ComplexPortal"/>
</dbReference>
<dbReference type="GO" id="GO:0019731">
    <property type="term" value="P:antibacterial humoral response"/>
    <property type="evidence" value="ECO:0000318"/>
    <property type="project" value="GO_Central"/>
</dbReference>
<dbReference type="GO" id="GO:0001788">
    <property type="term" value="P:antibody-dependent cellular cytotoxicity"/>
    <property type="evidence" value="ECO:0000314"/>
    <property type="project" value="UniProtKB"/>
</dbReference>
<dbReference type="GO" id="GO:0002450">
    <property type="term" value="P:B cell antigen processing and presentation"/>
    <property type="evidence" value="ECO:0000314"/>
    <property type="project" value="UniProtKB"/>
</dbReference>
<dbReference type="GO" id="GO:0042100">
    <property type="term" value="P:B cell proliferation"/>
    <property type="evidence" value="ECO:0000314"/>
    <property type="project" value="UniProtKB"/>
</dbReference>
<dbReference type="GO" id="GO:0050853">
    <property type="term" value="P:B cell receptor signaling pathway"/>
    <property type="evidence" value="ECO:0000314"/>
    <property type="project" value="UniProtKB"/>
</dbReference>
<dbReference type="GO" id="GO:0006958">
    <property type="term" value="P:complement activation, classical pathway"/>
    <property type="evidence" value="ECO:0000318"/>
    <property type="project" value="GO_Central"/>
</dbReference>
<dbReference type="GO" id="GO:0043308">
    <property type="term" value="P:eosinophil degranulation"/>
    <property type="evidence" value="ECO:0000314"/>
    <property type="project" value="UniProtKB"/>
</dbReference>
<dbReference type="GO" id="GO:0160006">
    <property type="term" value="P:Fc receptor-mediated immune complex endocytosis"/>
    <property type="evidence" value="ECO:0000314"/>
    <property type="project" value="UniProtKB"/>
</dbReference>
<dbReference type="GO" id="GO:0006955">
    <property type="term" value="P:immune response"/>
    <property type="evidence" value="ECO:0000303"/>
    <property type="project" value="UniProtKB"/>
</dbReference>
<dbReference type="GO" id="GO:0006954">
    <property type="term" value="P:inflammatory response"/>
    <property type="evidence" value="ECO:0007669"/>
    <property type="project" value="UniProtKB-KW"/>
</dbReference>
<dbReference type="GO" id="GO:0042116">
    <property type="term" value="P:macrophage activation"/>
    <property type="evidence" value="ECO:0000314"/>
    <property type="project" value="UniProtKB"/>
</dbReference>
<dbReference type="GO" id="GO:0030225">
    <property type="term" value="P:macrophage differentiation"/>
    <property type="evidence" value="ECO:0000314"/>
    <property type="project" value="UniProtKB"/>
</dbReference>
<dbReference type="GO" id="GO:0043303">
    <property type="term" value="P:mast cell degranulation"/>
    <property type="evidence" value="ECO:0000314"/>
    <property type="project" value="UniProtKB"/>
</dbReference>
<dbReference type="GO" id="GO:0090720">
    <property type="term" value="P:primary adaptive immune response"/>
    <property type="evidence" value="ECO:0000315"/>
    <property type="project" value="UniProtKB"/>
</dbReference>
<dbReference type="GO" id="GO:0042092">
    <property type="term" value="P:type 2 immune response"/>
    <property type="evidence" value="ECO:0000314"/>
    <property type="project" value="UniProtKB"/>
</dbReference>
<dbReference type="GO" id="GO:0016068">
    <property type="term" value="P:type I hypersensitivity"/>
    <property type="evidence" value="ECO:0000314"/>
    <property type="project" value="UniProtKB"/>
</dbReference>
<dbReference type="CDD" id="cd21817">
    <property type="entry name" value="IgC1_CH1_IgEG"/>
    <property type="match status" value="1"/>
</dbReference>
<dbReference type="CDD" id="cd05847">
    <property type="entry name" value="IgC1_CH2_IgE"/>
    <property type="match status" value="1"/>
</dbReference>
<dbReference type="CDD" id="cd07696">
    <property type="entry name" value="IgC1_CH3_IgAEM_CH2_IgG"/>
    <property type="match status" value="1"/>
</dbReference>
<dbReference type="CDD" id="cd05768">
    <property type="entry name" value="IgC1_CH3_IgAGD_CH4_IgAEM"/>
    <property type="match status" value="1"/>
</dbReference>
<dbReference type="FunFam" id="2.60.40.10:FF:000998">
    <property type="entry name" value="Immunoglobulin heavy constant epsilon"/>
    <property type="match status" value="1"/>
</dbReference>
<dbReference type="FunFam" id="2.60.40.10:FF:001690">
    <property type="entry name" value="Immunoglobulin heavy constant epsilon"/>
    <property type="match status" value="1"/>
</dbReference>
<dbReference type="FunFam" id="2.60.40.10:FF:000463">
    <property type="entry name" value="Immunoglobulin heavy constant gamma 1"/>
    <property type="match status" value="1"/>
</dbReference>
<dbReference type="FunFam" id="2.60.40.10:FF:001540">
    <property type="entry name" value="Immunoglobulin heavy constant gamma 1"/>
    <property type="match status" value="1"/>
</dbReference>
<dbReference type="Gene3D" id="2.60.40.10">
    <property type="entry name" value="Immunoglobulins"/>
    <property type="match status" value="4"/>
</dbReference>
<dbReference type="InterPro" id="IPR007110">
    <property type="entry name" value="Ig-like_dom"/>
</dbReference>
<dbReference type="InterPro" id="IPR036179">
    <property type="entry name" value="Ig-like_dom_sf"/>
</dbReference>
<dbReference type="InterPro" id="IPR013783">
    <property type="entry name" value="Ig-like_fold"/>
</dbReference>
<dbReference type="InterPro" id="IPR003006">
    <property type="entry name" value="Ig/MHC_CS"/>
</dbReference>
<dbReference type="InterPro" id="IPR003597">
    <property type="entry name" value="Ig_C1-set"/>
</dbReference>
<dbReference type="InterPro" id="IPR050380">
    <property type="entry name" value="Immune_Resp_Modulators"/>
</dbReference>
<dbReference type="PANTHER" id="PTHR23411">
    <property type="entry name" value="TAPASIN"/>
    <property type="match status" value="1"/>
</dbReference>
<dbReference type="Pfam" id="PF07654">
    <property type="entry name" value="C1-set"/>
    <property type="match status" value="4"/>
</dbReference>
<dbReference type="SMART" id="SM00407">
    <property type="entry name" value="IGc1"/>
    <property type="match status" value="4"/>
</dbReference>
<dbReference type="SUPFAM" id="SSF48726">
    <property type="entry name" value="Immunoglobulin"/>
    <property type="match status" value="4"/>
</dbReference>
<dbReference type="PROSITE" id="PS50835">
    <property type="entry name" value="IG_LIKE"/>
    <property type="match status" value="4"/>
</dbReference>
<dbReference type="PROSITE" id="PS00290">
    <property type="entry name" value="IG_MHC"/>
    <property type="match status" value="3"/>
</dbReference>
<sequence>ASTQSPSVFPLTRCCKNIPSNATSVTLGCLATGYFPEPVMVTWDTGSLNGTTMTLPATTLTLSGHYATISLLTVSGAWAKQMFTCRVAHTPSSTDWVDNKTFSVCSRDFTPPTVKILQSSCDGGGHFPPTIQLLCLVSGYTPGTINITWLEDGQVMDVDLSTASTTQEGELASTQSELTLSQKHWLSDRTYTCQVTYQGHTFEDSTKKCADSNPRGVSAYLSRPSPFDLFIRKSPTITCLVVDLAPSKGTVNLTWSRASGKPVNHSTRKEEKQRNGTLTVTSTLPVGTRDWIEGETYQCRVTHPHLPRALMRSTTKTSGPRAAPEVYAFATPEWPGSRDKRTLACLIQNFMPEDISVQWLHNEVQLPDARHSTTQPRKTKGSGFFVFSRLEVTRAEWEQKDEFICRAVHEAASPSQTVQRAVSVNPGLAGGSAQSQRAPDRVLCHSGQQQGLPRAAGGSVPHPRCHCGAGRADWPGPPELDVCVEEAEGEAPWTWTGLCIFAALFLLSVSYSAAITLLMVQRFLSATRQGRPQTSLDYTNVLQPHA</sequence>
<proteinExistence type="evidence at protein level"/>
<accession>P01854</accession>
<accession>A0A286YES5</accession>
<gene>
    <name evidence="18 24" type="primary">IGHE</name>
</gene>
<comment type="function">
    <text evidence="20 21 22">Constant region of immunoglobulin heavy chains. Immunoglobulins, also known as antibodies, are membrane-bound or secreted glycoproteins produced by B lymphocytes. In the recognition phase of humoral immunity, the membrane-bound immunoglobulins serve as receptors which, upon binding of a specific antigen, trigger the clonal expansion and differentiation of B lymphocytes into immunoglobulins-secreting plasma cells. Secreted immunoglobulins mediate the effector phase of humoral immunity, which results in the elimination of bound antigens (PubMed:20176268, PubMed:22158414). The antigen binding site is formed by the variable domain of one heavy chain, together with that of its associated light chain. Thus, each immunoglobulin has two antigen binding sites with remarkable affinity for a particular antigen. The variable domains are assembled by a process called V-(D)-J rearrangement and can then be subjected to somatic hypermutations which, after exposure to antigen and selection, allow affinity maturation for a particular antigen (PubMed:17576170, PubMed:20176268).</text>
</comment>
<comment type="function">
    <molecule>Isoform 1</molecule>
    <text evidence="7 8 9 10 13 15 16 21 26 27">Constant region of secreted IgE, also known as the Fc region of IgE antibody. Mediates IgE effector functions on myeloid and lymphoid cells primarily via two Fc receptors, the high-affinity IgE Fc receptor complex/FCER1A:MS4A2:FCGR1A and the low-affinity FCER2 receptor, which upon antigen/allergen cross-linking initiate signaling pathways that lead to immune cell activation and differentiation (PubMed:2167225, PubMed:25629393, PubMed:33840121, PubMed:7544003, PubMed:8114916, PubMed:8551243). Triggers the immediate hypersensitivity response to allergens as a host defense mechanism against helminth parasites, pathogenic bacteria and venom toxicity. When dysregulated, it can elicit harmful life-threatening allergic and anaphylactic reactions (PubMed:25629393, PubMed:33840121, PubMed:7544003, PubMed:8114916, PubMed:8551243). Stimulates the high-affinity IgE Fc receptor complex/FCER1A:MS4A2:FCGR1A on mast cells, basophils and eosinophils leading to secretion of vasoactive amines, lipid mediators and cytokines that contribute to inflammatory response, tissue remodeling and cytotoxicity against microbes (PubMed:25629393, PubMed:8114916, PubMed:8551243). On macrophages, cross-linking of FCER2 by IgE immune complexes induces intracellular killing of parasites through activation of L-Arginine-nitric oxide pathway (PubMed:7544003). Activates macrophages to kill tumor cells via antigen-specific antibody-dependent cytotoxicity (ADCC). Triggers differentiation of quiescent M0 macrophages toward M1 state and reprograms M2 macrophages toward a proinflammatory state with antitumor functions (PubMed:30956175). Stimulates FCER2 on B cells and initiates IgE-dependent antigen uptake and presentation to T cells (PubMed:2167225).</text>
</comment>
<comment type="function">
    <molecule>Isoform 2</molecule>
    <text evidence="6 17">Constant region of membrane-bound IgE (long mIgE), part of the B cell receptor complex (BCR). Upon antigen cross-linking triggers quick BCR signaling, ensuring survival of IgE-switched B cells and differentiation into plasma cells, thus regulating both primary and memory IgE responses.</text>
</comment>
<comment type="function">
    <molecule>Isoform 3</molecule>
    <text evidence="17">Constant region of membrane-bound IgE (short mIgE), part of the B cell receptor complex (BCR). Upon antigen cross-linking initiates slower but sustained BCR signaling that negatively regulates mature B cell proliferation.</text>
</comment>
<comment type="subunit">
    <text evidence="14 17">The basic structural unit of both sIgE and mIgE molecules consists of two identical heavy chains and two identical light chains; disulfide-linked. N-terminal variable regions of the heavy and light chains form the antigen binding sites, whereas the C-terminal constant regions of the heavy chains interact with immune receptors to mediate effector functions.</text>
</comment>
<comment type="subunit">
    <molecule>Isoform 1</molecule>
    <text evidence="3 5 14">Part of IgE antibody (PubMed:7995941). Interacts (via CH3) with the alpha chain/FCE1RA of IgE Fc receptor complex (PubMed:10917520). Interacts (via CH3 region) with FCER2 (via C-type lectin domain); this interaction regulates IgE homeostasis (PubMed:16172256).</text>
</comment>
<comment type="subunit">
    <molecule>Isoform 2</molecule>
    <text evidence="17">Part of IgE B cell antigen receptor complex (BCR). The BCR complex consists of one mIgE molecule responsible for antigen binding, non-covalently associated with CD79A and CD79B signaling chains.</text>
</comment>
<comment type="subunit">
    <molecule>Isoform 3</molecule>
    <text evidence="17">Part of IgE B cell antigen receptor complex (BCR). The BCR complex consists of one mIgE molecule responsible for antigen binding, non-covalently associated with CD79A and CD79B signaling chains.</text>
</comment>
<comment type="subcellular location">
    <molecule>Isoform 1</molecule>
    <subcellularLocation>
        <location evidence="14">Secreted</location>
    </subcellularLocation>
</comment>
<comment type="subcellular location">
    <molecule>Isoform 2</molecule>
    <subcellularLocation>
        <location evidence="6 14 17">Cell membrane</location>
        <topology evidence="1">Single-pass type I membrane protein</topology>
    </subcellularLocation>
</comment>
<comment type="subcellular location">
    <molecule>Isoform 3</molecule>
    <subcellularLocation>
        <location evidence="17">Cell membrane</location>
        <topology evidence="1">Single-pass type I membrane protein</topology>
    </subcellularLocation>
</comment>
<comment type="alternative products">
    <event type="alternative splicing"/>
    <isoform>
        <id>P01854-2</id>
        <name>2</name>
        <name>Membrane-bound</name>
        <name evidence="19">long mIgE</name>
        <sequence type="displayed"/>
    </isoform>
    <isoform>
        <id>P01854-1</id>
        <name>1</name>
        <name>Secreted</name>
        <name evidence="23">sIgE</name>
        <sequence type="described" ref="VSP_061835 VSP_061836"/>
    </isoform>
    <isoform>
        <id>P01854-3</id>
        <name>3</name>
        <name>Membrane-bound</name>
        <name evidence="19">short mIgE</name>
        <sequence type="described" ref="VSP_061834"/>
    </isoform>
</comment>
<comment type="tissue specificity">
    <molecule>Isoform 2</molecule>
    <text evidence="4">Expressed in B lymphocytes stimulated with IL4 and CD40.</text>
</comment>
<comment type="polymorphism">
    <text evidence="25">There are several alleles. The sequence shown is that of IMGT allele IGHE*04.</text>
</comment>
<comment type="caution">
    <text>For an example of a full-length immunoglobulin epsilon heavy chain see AC P0DOX4.</text>
</comment>
<comment type="sequence caution" evidence="25">
    <conflict type="erroneous initiation">
        <sequence resource="EMBL-CDS" id="AAB59395"/>
    </conflict>
    <text>Truncated N-terminus.</text>
</comment>
<comment type="sequence caution" evidence="25">
    <conflict type="erroneous initiation">
        <sequence resource="EMBL-CDS" id="AAB59424"/>
    </conflict>
    <text>Extended N-terminus.</text>
</comment>
<evidence type="ECO:0000255" key="1"/>
<evidence type="ECO:0000255" key="2">
    <source>
        <dbReference type="PROSITE-ProRule" id="PRU00114"/>
    </source>
</evidence>
<evidence type="ECO:0000269" key="3">
    <source>
    </source>
</evidence>
<evidence type="ECO:0000269" key="4">
    <source>
    </source>
</evidence>
<evidence type="ECO:0000269" key="5">
    <source>
    </source>
</evidence>
<evidence type="ECO:0000269" key="6">
    <source>
    </source>
</evidence>
<evidence type="ECO:0000269" key="7">
    <source>
    </source>
</evidence>
<evidence type="ECO:0000269" key="8">
    <source>
    </source>
</evidence>
<evidence type="ECO:0000269" key="9">
    <source>
    </source>
</evidence>
<evidence type="ECO:0000269" key="10">
    <source>
    </source>
</evidence>
<evidence type="ECO:0000269" key="11">
    <source>
    </source>
</evidence>
<evidence type="ECO:0000269" key="12">
    <source>
    </source>
</evidence>
<evidence type="ECO:0000269" key="13">
    <source>
    </source>
</evidence>
<evidence type="ECO:0000269" key="14">
    <source>
    </source>
</evidence>
<evidence type="ECO:0000269" key="15">
    <source>
    </source>
</evidence>
<evidence type="ECO:0000269" key="16">
    <source>
    </source>
</evidence>
<evidence type="ECO:0000269" key="17">
    <source>
    </source>
</evidence>
<evidence type="ECO:0000303" key="18">
    <source>
    </source>
</evidence>
<evidence type="ECO:0000303" key="19">
    <source>
    </source>
</evidence>
<evidence type="ECO:0000303" key="20">
    <source>
    </source>
</evidence>
<evidence type="ECO:0000303" key="21">
    <source>
    </source>
</evidence>
<evidence type="ECO:0000303" key="22">
    <source>
    </source>
</evidence>
<evidence type="ECO:0000303" key="23">
    <source>
    </source>
</evidence>
<evidence type="ECO:0000303" key="24">
    <source ref="22"/>
</evidence>
<evidence type="ECO:0000305" key="25"/>
<evidence type="ECO:0000305" key="26">
    <source>
    </source>
</evidence>
<evidence type="ECO:0000305" key="27">
    <source>
    </source>
</evidence>
<evidence type="ECO:0000305" key="28">
    <source ref="1"/>
</evidence>
<evidence type="ECO:0007829" key="29">
    <source>
        <dbReference type="PDB" id="1F6A"/>
    </source>
</evidence>
<evidence type="ECO:0007829" key="30">
    <source>
        <dbReference type="PDB" id="1FP5"/>
    </source>
</evidence>
<evidence type="ECO:0007829" key="31">
    <source>
        <dbReference type="PDB" id="1G84"/>
    </source>
</evidence>
<evidence type="ECO:0007829" key="32">
    <source>
        <dbReference type="PDB" id="3H9Y"/>
    </source>
</evidence>
<evidence type="ECO:0007829" key="33">
    <source>
        <dbReference type="PDB" id="5LGJ"/>
    </source>
</evidence>
<evidence type="ECO:0007829" key="34">
    <source>
        <dbReference type="PDB" id="5MOL"/>
    </source>
</evidence>
<protein>
    <recommendedName>
        <fullName evidence="18 24">Immunoglobulin heavy constant epsilon</fullName>
    </recommendedName>
    <alternativeName>
        <fullName evidence="25">Ig epsilon chain C region</fullName>
    </alternativeName>
    <alternativeName>
        <fullName evidence="28">Ig epsilon chain C region ND</fullName>
    </alternativeName>
</protein>